<sequence>MAKQEQNIVYLYCDGACRGNPGPGGWGVLLRYNQHERQLHGGVANTTNNQMELTAAIEGLKSLKKPCQVVVTTDSQYLRRGITEWLPVWKRRGWRTSNKKPVKNQPLWETLEREVERHTIVWHWVKGHSGHAENEIADELANRGIDEVLKRGAQ</sequence>
<comment type="function">
    <text evidence="1">Endonuclease that specifically degrades the RNA of RNA-DNA hybrids.</text>
</comment>
<comment type="catalytic activity">
    <reaction evidence="1">
        <text>Endonucleolytic cleavage to 5'-phosphomonoester.</text>
        <dbReference type="EC" id="3.1.26.4"/>
    </reaction>
</comment>
<comment type="cofactor">
    <cofactor evidence="1">
        <name>Mg(2+)</name>
        <dbReference type="ChEBI" id="CHEBI:18420"/>
    </cofactor>
    <text evidence="1">Binds 1 Mg(2+) ion per subunit. May bind a second metal ion at a regulatory site, or after substrate binding.</text>
</comment>
<comment type="subunit">
    <text evidence="1">Monomer.</text>
</comment>
<comment type="subcellular location">
    <subcellularLocation>
        <location evidence="1">Cytoplasm</location>
    </subcellularLocation>
</comment>
<comment type="similarity">
    <text evidence="1">Belongs to the RNase H family.</text>
</comment>
<proteinExistence type="inferred from homology"/>
<feature type="chain" id="PRO_1000090897" description="Ribonuclease H">
    <location>
        <begin position="1"/>
        <end position="154"/>
    </location>
</feature>
<feature type="domain" description="RNase H type-1" evidence="2">
    <location>
        <begin position="5"/>
        <end position="146"/>
    </location>
</feature>
<feature type="binding site" evidence="1">
    <location>
        <position position="14"/>
    </location>
    <ligand>
        <name>Mg(2+)</name>
        <dbReference type="ChEBI" id="CHEBI:18420"/>
        <label>1</label>
    </ligand>
</feature>
<feature type="binding site" evidence="1">
    <location>
        <position position="14"/>
    </location>
    <ligand>
        <name>Mg(2+)</name>
        <dbReference type="ChEBI" id="CHEBI:18420"/>
        <label>2</label>
    </ligand>
</feature>
<feature type="binding site" evidence="1">
    <location>
        <position position="52"/>
    </location>
    <ligand>
        <name>Mg(2+)</name>
        <dbReference type="ChEBI" id="CHEBI:18420"/>
        <label>1</label>
    </ligand>
</feature>
<feature type="binding site" evidence="1">
    <location>
        <position position="74"/>
    </location>
    <ligand>
        <name>Mg(2+)</name>
        <dbReference type="ChEBI" id="CHEBI:18420"/>
        <label>1</label>
    </ligand>
</feature>
<feature type="binding site" evidence="1">
    <location>
        <position position="138"/>
    </location>
    <ligand>
        <name>Mg(2+)</name>
        <dbReference type="ChEBI" id="CHEBI:18420"/>
        <label>2</label>
    </ligand>
</feature>
<name>RNH_COXB2</name>
<evidence type="ECO:0000255" key="1">
    <source>
        <dbReference type="HAMAP-Rule" id="MF_00042"/>
    </source>
</evidence>
<evidence type="ECO:0000255" key="2">
    <source>
        <dbReference type="PROSITE-ProRule" id="PRU00408"/>
    </source>
</evidence>
<reference key="1">
    <citation type="journal article" date="2009" name="Infect. Immun.">
        <title>Comparative genomics reveal extensive transposon-mediated genomic plasticity and diversity among potential effector proteins within the genus Coxiella.</title>
        <authorList>
            <person name="Beare P.A."/>
            <person name="Unsworth N."/>
            <person name="Andoh M."/>
            <person name="Voth D.E."/>
            <person name="Omsland A."/>
            <person name="Gilk S.D."/>
            <person name="Williams K.P."/>
            <person name="Sobral B.W."/>
            <person name="Kupko J.J. III"/>
            <person name="Porcella S.F."/>
            <person name="Samuel J.E."/>
            <person name="Heinzen R.A."/>
        </authorList>
    </citation>
    <scope>NUCLEOTIDE SEQUENCE [LARGE SCALE GENOMIC DNA]</scope>
    <source>
        <strain>CbuG_Q212</strain>
    </source>
</reference>
<keyword id="KW-0963">Cytoplasm</keyword>
<keyword id="KW-0255">Endonuclease</keyword>
<keyword id="KW-0378">Hydrolase</keyword>
<keyword id="KW-0460">Magnesium</keyword>
<keyword id="KW-0479">Metal-binding</keyword>
<keyword id="KW-0540">Nuclease</keyword>
<organism>
    <name type="scientific">Coxiella burnetii (strain CbuG_Q212)</name>
    <name type="common">Coxiella burnetii (strain Q212)</name>
    <dbReference type="NCBI Taxonomy" id="434923"/>
    <lineage>
        <taxon>Bacteria</taxon>
        <taxon>Pseudomonadati</taxon>
        <taxon>Pseudomonadota</taxon>
        <taxon>Gammaproteobacteria</taxon>
        <taxon>Legionellales</taxon>
        <taxon>Coxiellaceae</taxon>
        <taxon>Coxiella</taxon>
    </lineage>
</organism>
<dbReference type="EC" id="3.1.26.4" evidence="1"/>
<dbReference type="EMBL" id="CP001019">
    <property type="protein sequence ID" value="ACJ18965.1"/>
    <property type="molecule type" value="Genomic_DNA"/>
</dbReference>
<dbReference type="RefSeq" id="WP_011997258.1">
    <property type="nucleotide sequence ID" value="NC_011527.1"/>
</dbReference>
<dbReference type="SMR" id="B6J1Y7"/>
<dbReference type="KEGG" id="cbg:CbuG_1688"/>
<dbReference type="HOGENOM" id="CLU_030894_6_0_6"/>
<dbReference type="GO" id="GO:0005737">
    <property type="term" value="C:cytoplasm"/>
    <property type="evidence" value="ECO:0007669"/>
    <property type="project" value="UniProtKB-SubCell"/>
</dbReference>
<dbReference type="GO" id="GO:0000287">
    <property type="term" value="F:magnesium ion binding"/>
    <property type="evidence" value="ECO:0007669"/>
    <property type="project" value="UniProtKB-UniRule"/>
</dbReference>
<dbReference type="GO" id="GO:0003676">
    <property type="term" value="F:nucleic acid binding"/>
    <property type="evidence" value="ECO:0007669"/>
    <property type="project" value="InterPro"/>
</dbReference>
<dbReference type="GO" id="GO:0004523">
    <property type="term" value="F:RNA-DNA hybrid ribonuclease activity"/>
    <property type="evidence" value="ECO:0007669"/>
    <property type="project" value="UniProtKB-UniRule"/>
</dbReference>
<dbReference type="GO" id="GO:0043137">
    <property type="term" value="P:DNA replication, removal of RNA primer"/>
    <property type="evidence" value="ECO:0007669"/>
    <property type="project" value="TreeGrafter"/>
</dbReference>
<dbReference type="CDD" id="cd09278">
    <property type="entry name" value="RNase_HI_prokaryote_like"/>
    <property type="match status" value="1"/>
</dbReference>
<dbReference type="FunFam" id="3.30.420.10:FF:000089">
    <property type="entry name" value="Ribonuclease H"/>
    <property type="match status" value="1"/>
</dbReference>
<dbReference type="Gene3D" id="3.30.420.10">
    <property type="entry name" value="Ribonuclease H-like superfamily/Ribonuclease H"/>
    <property type="match status" value="1"/>
</dbReference>
<dbReference type="HAMAP" id="MF_00042">
    <property type="entry name" value="RNase_H"/>
    <property type="match status" value="1"/>
</dbReference>
<dbReference type="InterPro" id="IPR050092">
    <property type="entry name" value="RNase_H"/>
</dbReference>
<dbReference type="InterPro" id="IPR012337">
    <property type="entry name" value="RNaseH-like_sf"/>
</dbReference>
<dbReference type="InterPro" id="IPR002156">
    <property type="entry name" value="RNaseH_domain"/>
</dbReference>
<dbReference type="InterPro" id="IPR036397">
    <property type="entry name" value="RNaseH_sf"/>
</dbReference>
<dbReference type="InterPro" id="IPR022892">
    <property type="entry name" value="RNaseHI"/>
</dbReference>
<dbReference type="NCBIfam" id="NF001236">
    <property type="entry name" value="PRK00203.1"/>
    <property type="match status" value="1"/>
</dbReference>
<dbReference type="PANTHER" id="PTHR10642">
    <property type="entry name" value="RIBONUCLEASE H1"/>
    <property type="match status" value="1"/>
</dbReference>
<dbReference type="PANTHER" id="PTHR10642:SF26">
    <property type="entry name" value="RIBONUCLEASE H1"/>
    <property type="match status" value="1"/>
</dbReference>
<dbReference type="Pfam" id="PF00075">
    <property type="entry name" value="RNase_H"/>
    <property type="match status" value="1"/>
</dbReference>
<dbReference type="SUPFAM" id="SSF53098">
    <property type="entry name" value="Ribonuclease H-like"/>
    <property type="match status" value="1"/>
</dbReference>
<dbReference type="PROSITE" id="PS50879">
    <property type="entry name" value="RNASE_H_1"/>
    <property type="match status" value="1"/>
</dbReference>
<gene>
    <name evidence="1" type="primary">rnhA</name>
    <name type="ordered locus">CbuG_1688</name>
</gene>
<protein>
    <recommendedName>
        <fullName evidence="1">Ribonuclease H</fullName>
        <shortName evidence="1">RNase H</shortName>
        <ecNumber evidence="1">3.1.26.4</ecNumber>
    </recommendedName>
</protein>
<accession>B6J1Y7</accession>